<gene>
    <name type="primary">DHCR24</name>
    <name type="synonym">KIAA0018</name>
</gene>
<sequence>MEPAVSLAVCALLFLLWVRLKGLEFVLIHQRWVFVCLFLLPLSLIFDIYYYVRAWVVFKLSSAPRLHEQRVRDIQKQVREWKEQGSKTFMCTGRPGWLTVSLRVGKYKKTHKNIMINLMDILEVDTKKQIVRVEPLVTMGQVTALLTSIGWTLPVLPELDDLTVGGLIMGTGIESSSHKYGLFQHICTAYELVLADGSFVRCTPSENSDLFYAVPWSCGTLGFLVAAEIRIIPAKKYVKLRFEPVRGLEAICAKFTHESQRQENHFVEGLLYSLDEAVIMTGVMTDEAEPSKLNSIGNYYKPWFFKHVENYLKTNREGLEYIPLRHYYHRHTRSIFWELQDIIPFGNNPIFRYLFGWMVPPKISLLKLTQGETLRKLYEQHHVVQDMLVPMKCLQQALHTFQNDIHVYPIWLCPFILPSQPGLVHPKGNEAELYIDIGAYGEPRVKHFEARSCMRQLEKFVRSVHGFQMLYADCYMNREEFWEMFDGSLYHKLREKLGCQDAFPEVYDKICKAARH</sequence>
<dbReference type="EC" id="1.3.1.72" evidence="5 6"/>
<dbReference type="EMBL" id="AF261758">
    <property type="protein sequence ID" value="AAG17288.1"/>
    <property type="molecule type" value="mRNA"/>
</dbReference>
<dbReference type="EMBL" id="AF398342">
    <property type="protein sequence ID" value="AAL15644.1"/>
    <property type="molecule type" value="Genomic_DNA"/>
</dbReference>
<dbReference type="EMBL" id="AF398336">
    <property type="protein sequence ID" value="AAL15644.1"/>
    <property type="status" value="JOINED"/>
    <property type="molecule type" value="Genomic_DNA"/>
</dbReference>
<dbReference type="EMBL" id="AF398337">
    <property type="protein sequence ID" value="AAL15644.1"/>
    <property type="status" value="JOINED"/>
    <property type="molecule type" value="Genomic_DNA"/>
</dbReference>
<dbReference type="EMBL" id="AF398338">
    <property type="protein sequence ID" value="AAL15644.1"/>
    <property type="status" value="JOINED"/>
    <property type="molecule type" value="Genomic_DNA"/>
</dbReference>
<dbReference type="EMBL" id="AF398339">
    <property type="protein sequence ID" value="AAL15644.1"/>
    <property type="status" value="JOINED"/>
    <property type="molecule type" value="Genomic_DNA"/>
</dbReference>
<dbReference type="EMBL" id="AF398340">
    <property type="protein sequence ID" value="AAL15644.1"/>
    <property type="status" value="JOINED"/>
    <property type="molecule type" value="Genomic_DNA"/>
</dbReference>
<dbReference type="EMBL" id="AF398341">
    <property type="protein sequence ID" value="AAL15644.1"/>
    <property type="status" value="JOINED"/>
    <property type="molecule type" value="Genomic_DNA"/>
</dbReference>
<dbReference type="EMBL" id="D13643">
    <property type="protein sequence ID" value="BAA02806.3"/>
    <property type="status" value="ALT_INIT"/>
    <property type="molecule type" value="mRNA"/>
</dbReference>
<dbReference type="EMBL" id="AK302774">
    <property type="protein sequence ID" value="BAH13803.1"/>
    <property type="molecule type" value="mRNA"/>
</dbReference>
<dbReference type="EMBL" id="AC096536">
    <property type="status" value="NOT_ANNOTATED_CDS"/>
    <property type="molecule type" value="Genomic_DNA"/>
</dbReference>
<dbReference type="EMBL" id="CH471059">
    <property type="protein sequence ID" value="EAX06663.1"/>
    <property type="molecule type" value="Genomic_DNA"/>
</dbReference>
<dbReference type="EMBL" id="CH471059">
    <property type="protein sequence ID" value="EAX06664.1"/>
    <property type="molecule type" value="Genomic_DNA"/>
</dbReference>
<dbReference type="EMBL" id="BC004375">
    <property type="protein sequence ID" value="AAH04375.1"/>
    <property type="molecule type" value="mRNA"/>
</dbReference>
<dbReference type="EMBL" id="BC011669">
    <property type="protein sequence ID" value="AAH11669.1"/>
    <property type="molecule type" value="mRNA"/>
</dbReference>
<dbReference type="CCDS" id="CCDS600.1">
    <molecule id="Q15392-1"/>
</dbReference>
<dbReference type="RefSeq" id="NP_055577.1">
    <molecule id="Q15392-1"/>
    <property type="nucleotide sequence ID" value="NM_014762.4"/>
</dbReference>
<dbReference type="BioGRID" id="108064">
    <property type="interactions" value="186"/>
</dbReference>
<dbReference type="CORUM" id="Q15392"/>
<dbReference type="FunCoup" id="Q15392">
    <property type="interactions" value="1145"/>
</dbReference>
<dbReference type="IntAct" id="Q15392">
    <property type="interactions" value="112"/>
</dbReference>
<dbReference type="MINT" id="Q15392"/>
<dbReference type="STRING" id="9606.ENSP00000360316"/>
<dbReference type="BindingDB" id="Q15392"/>
<dbReference type="ChEMBL" id="CHEMBL2331059"/>
<dbReference type="DrugCentral" id="Q15392"/>
<dbReference type="SwissLipids" id="SLP:000001223"/>
<dbReference type="GlyGen" id="Q15392">
    <property type="glycosylation" value="1 site, 1 O-linked glycan (1 site)"/>
</dbReference>
<dbReference type="iPTMnet" id="Q15392"/>
<dbReference type="MetOSite" id="Q15392"/>
<dbReference type="PhosphoSitePlus" id="Q15392"/>
<dbReference type="SwissPalm" id="Q15392"/>
<dbReference type="BioMuta" id="DHCR24"/>
<dbReference type="DMDM" id="20141421"/>
<dbReference type="jPOST" id="Q15392"/>
<dbReference type="MassIVE" id="Q15392"/>
<dbReference type="PaxDb" id="9606-ENSP00000360316"/>
<dbReference type="PeptideAtlas" id="Q15392"/>
<dbReference type="ProteomicsDB" id="60562">
    <molecule id="Q15392-1"/>
</dbReference>
<dbReference type="ProteomicsDB" id="6916"/>
<dbReference type="Pumba" id="Q15392"/>
<dbReference type="Antibodypedia" id="33226">
    <property type="antibodies" value="238 antibodies from 30 providers"/>
</dbReference>
<dbReference type="DNASU" id="1718"/>
<dbReference type="Ensembl" id="ENST00000371269.9">
    <molecule id="Q15392-1"/>
    <property type="protein sequence ID" value="ENSP00000360316.3"/>
    <property type="gene ID" value="ENSG00000116133.13"/>
</dbReference>
<dbReference type="Ensembl" id="ENST00000436604.2">
    <molecule id="Q15392-1"/>
    <property type="protein sequence ID" value="ENSP00000416585.2"/>
    <property type="gene ID" value="ENSG00000116133.13"/>
</dbReference>
<dbReference type="GeneID" id="1718"/>
<dbReference type="KEGG" id="hsa:1718"/>
<dbReference type="MANE-Select" id="ENST00000371269.9">
    <property type="protein sequence ID" value="ENSP00000360316.3"/>
    <property type="RefSeq nucleotide sequence ID" value="NM_014762.4"/>
    <property type="RefSeq protein sequence ID" value="NP_055577.1"/>
</dbReference>
<dbReference type="UCSC" id="uc001cyc.2">
    <molecule id="Q15392-1"/>
    <property type="organism name" value="human"/>
</dbReference>
<dbReference type="AGR" id="HGNC:2859"/>
<dbReference type="CTD" id="1718"/>
<dbReference type="DisGeNET" id="1718"/>
<dbReference type="GeneCards" id="DHCR24"/>
<dbReference type="HGNC" id="HGNC:2859">
    <property type="gene designation" value="DHCR24"/>
</dbReference>
<dbReference type="HPA" id="ENSG00000116133">
    <property type="expression patterns" value="Tissue enhanced (adrenal gland, liver)"/>
</dbReference>
<dbReference type="MalaCards" id="DHCR24"/>
<dbReference type="MIM" id="602398">
    <property type="type" value="phenotype"/>
</dbReference>
<dbReference type="MIM" id="606418">
    <property type="type" value="gene"/>
</dbReference>
<dbReference type="neXtProt" id="NX_Q15392"/>
<dbReference type="OpenTargets" id="ENSG00000116133"/>
<dbReference type="Orphanet" id="35107">
    <property type="disease" value="Desmosterolosis"/>
</dbReference>
<dbReference type="PharmGKB" id="PA27320"/>
<dbReference type="VEuPathDB" id="HostDB:ENSG00000116133"/>
<dbReference type="eggNOG" id="KOG1262">
    <property type="taxonomic scope" value="Eukaryota"/>
</dbReference>
<dbReference type="GeneTree" id="ENSGT00390000008338"/>
<dbReference type="InParanoid" id="Q15392"/>
<dbReference type="OrthoDB" id="415825at2759"/>
<dbReference type="PAN-GO" id="Q15392">
    <property type="GO annotations" value="4 GO annotations based on evolutionary models"/>
</dbReference>
<dbReference type="PhylomeDB" id="Q15392"/>
<dbReference type="TreeFam" id="TF313170"/>
<dbReference type="BRENDA" id="1.3.1.72">
    <property type="organism ID" value="2681"/>
</dbReference>
<dbReference type="PathwayCommons" id="Q15392"/>
<dbReference type="Reactome" id="R-HSA-191273">
    <property type="pathway name" value="Cholesterol biosynthesis"/>
</dbReference>
<dbReference type="Reactome" id="R-HSA-6807047">
    <property type="pathway name" value="Cholesterol biosynthesis via desmosterol"/>
</dbReference>
<dbReference type="Reactome" id="R-HSA-6807062">
    <property type="pathway name" value="Cholesterol biosynthesis via lathosterol"/>
</dbReference>
<dbReference type="SignaLink" id="Q15392"/>
<dbReference type="SIGNOR" id="Q15392"/>
<dbReference type="UniPathway" id="UPA00063"/>
<dbReference type="BioGRID-ORCS" id="1718">
    <property type="hits" value="22 hits in 1166 CRISPR screens"/>
</dbReference>
<dbReference type="ChiTaRS" id="DHCR24">
    <property type="organism name" value="human"/>
</dbReference>
<dbReference type="GeneWiki" id="24-dehydrocholesterol_reductase"/>
<dbReference type="GenomeRNAi" id="1718"/>
<dbReference type="Pharos" id="Q15392">
    <property type="development level" value="Tchem"/>
</dbReference>
<dbReference type="PRO" id="PR:Q15392"/>
<dbReference type="Proteomes" id="UP000005640">
    <property type="component" value="Chromosome 1"/>
</dbReference>
<dbReference type="RNAct" id="Q15392">
    <property type="molecule type" value="protein"/>
</dbReference>
<dbReference type="Bgee" id="ENSG00000116133">
    <property type="expression patterns" value="Expressed in adrenal tissue and 197 other cell types or tissues"/>
</dbReference>
<dbReference type="ExpressionAtlas" id="Q15392">
    <property type="expression patterns" value="baseline and differential"/>
</dbReference>
<dbReference type="GO" id="GO:0005737">
    <property type="term" value="C:cytoplasm"/>
    <property type="evidence" value="ECO:0000318"/>
    <property type="project" value="GO_Central"/>
</dbReference>
<dbReference type="GO" id="GO:0005783">
    <property type="term" value="C:endoplasmic reticulum"/>
    <property type="evidence" value="ECO:0000314"/>
    <property type="project" value="UniProtKB"/>
</dbReference>
<dbReference type="GO" id="GO:0005789">
    <property type="term" value="C:endoplasmic reticulum membrane"/>
    <property type="evidence" value="ECO:0000304"/>
    <property type="project" value="Reactome"/>
</dbReference>
<dbReference type="GO" id="GO:0000139">
    <property type="term" value="C:Golgi membrane"/>
    <property type="evidence" value="ECO:0007669"/>
    <property type="project" value="UniProtKB-SubCell"/>
</dbReference>
<dbReference type="GO" id="GO:0016020">
    <property type="term" value="C:membrane"/>
    <property type="evidence" value="ECO:0007005"/>
    <property type="project" value="UniProtKB"/>
</dbReference>
<dbReference type="GO" id="GO:0005634">
    <property type="term" value="C:nucleus"/>
    <property type="evidence" value="ECO:0000314"/>
    <property type="project" value="UniProtKB"/>
</dbReference>
<dbReference type="GO" id="GO:0000246">
    <property type="term" value="F:Delta24(24-1) sterol reductase activity"/>
    <property type="evidence" value="ECO:0000315"/>
    <property type="project" value="UniProtKB"/>
</dbReference>
<dbReference type="GO" id="GO:0050614">
    <property type="term" value="F:Delta24-sterol reductase activity"/>
    <property type="evidence" value="ECO:0000269"/>
    <property type="project" value="Reactome"/>
</dbReference>
<dbReference type="GO" id="GO:0019899">
    <property type="term" value="F:enzyme binding"/>
    <property type="evidence" value="ECO:0000353"/>
    <property type="project" value="UniProtKB"/>
</dbReference>
<dbReference type="GO" id="GO:0071949">
    <property type="term" value="F:FAD binding"/>
    <property type="evidence" value="ECO:0007669"/>
    <property type="project" value="InterPro"/>
</dbReference>
<dbReference type="GO" id="GO:0016628">
    <property type="term" value="F:oxidoreductase activity, acting on the CH-CH group of donors, NAD or NADP as acceptor"/>
    <property type="evidence" value="ECO:0000314"/>
    <property type="project" value="MGI"/>
</dbReference>
<dbReference type="GO" id="GO:0042605">
    <property type="term" value="F:peptide antigen binding"/>
    <property type="evidence" value="ECO:0000353"/>
    <property type="project" value="UniProtKB"/>
</dbReference>
<dbReference type="GO" id="GO:0042987">
    <property type="term" value="P:amyloid precursor protein catabolic process"/>
    <property type="evidence" value="ECO:0007669"/>
    <property type="project" value="Ensembl"/>
</dbReference>
<dbReference type="GO" id="GO:0006695">
    <property type="term" value="P:cholesterol biosynthetic process"/>
    <property type="evidence" value="ECO:0000315"/>
    <property type="project" value="MGI"/>
</dbReference>
<dbReference type="GO" id="GO:0033489">
    <property type="term" value="P:cholesterol biosynthetic process via desmosterol"/>
    <property type="evidence" value="ECO:0000315"/>
    <property type="project" value="UniProtKB"/>
</dbReference>
<dbReference type="GO" id="GO:0033490">
    <property type="term" value="P:cholesterol biosynthetic process via lathosterol"/>
    <property type="evidence" value="ECO:0000304"/>
    <property type="project" value="Reactome"/>
</dbReference>
<dbReference type="GO" id="GO:0030539">
    <property type="term" value="P:male genitalia development"/>
    <property type="evidence" value="ECO:0007669"/>
    <property type="project" value="Ensembl"/>
</dbReference>
<dbReference type="GO" id="GO:0061024">
    <property type="term" value="P:membrane organization"/>
    <property type="evidence" value="ECO:0007669"/>
    <property type="project" value="Ensembl"/>
</dbReference>
<dbReference type="GO" id="GO:0008285">
    <property type="term" value="P:negative regulation of cell population proliferation"/>
    <property type="evidence" value="ECO:0007669"/>
    <property type="project" value="Ensembl"/>
</dbReference>
<dbReference type="GO" id="GO:0031639">
    <property type="term" value="P:plasminogen activation"/>
    <property type="evidence" value="ECO:0007669"/>
    <property type="project" value="Ensembl"/>
</dbReference>
<dbReference type="GO" id="GO:0008104">
    <property type="term" value="P:protein localization"/>
    <property type="evidence" value="ECO:0007669"/>
    <property type="project" value="Ensembl"/>
</dbReference>
<dbReference type="GO" id="GO:0007265">
    <property type="term" value="P:Ras protein signal transduction"/>
    <property type="evidence" value="ECO:0007669"/>
    <property type="project" value="Ensembl"/>
</dbReference>
<dbReference type="GO" id="GO:0009725">
    <property type="term" value="P:response to hormone"/>
    <property type="evidence" value="ECO:0007669"/>
    <property type="project" value="Ensembl"/>
</dbReference>
<dbReference type="GO" id="GO:0043588">
    <property type="term" value="P:skin development"/>
    <property type="evidence" value="ECO:0000250"/>
    <property type="project" value="UniProtKB"/>
</dbReference>
<dbReference type="GO" id="GO:0008202">
    <property type="term" value="P:steroid metabolic process"/>
    <property type="evidence" value="ECO:0000318"/>
    <property type="project" value="GO_Central"/>
</dbReference>
<dbReference type="GO" id="GO:0009888">
    <property type="term" value="P:tissue development"/>
    <property type="evidence" value="ECO:0000315"/>
    <property type="project" value="UniProtKB"/>
</dbReference>
<dbReference type="FunFam" id="3.30.465.10:FF:000032">
    <property type="entry name" value="Delta(24)-sterol reductase"/>
    <property type="match status" value="1"/>
</dbReference>
<dbReference type="Gene3D" id="3.30.465.10">
    <property type="match status" value="1"/>
</dbReference>
<dbReference type="InterPro" id="IPR040165">
    <property type="entry name" value="Diminuto-like"/>
</dbReference>
<dbReference type="InterPro" id="IPR016166">
    <property type="entry name" value="FAD-bd_PCMH"/>
</dbReference>
<dbReference type="InterPro" id="IPR036318">
    <property type="entry name" value="FAD-bd_PCMH-like_sf"/>
</dbReference>
<dbReference type="InterPro" id="IPR016169">
    <property type="entry name" value="FAD-bd_PCMH_sub2"/>
</dbReference>
<dbReference type="InterPro" id="IPR006094">
    <property type="entry name" value="Oxid_FAD_bind_N"/>
</dbReference>
<dbReference type="PANTHER" id="PTHR10801">
    <property type="entry name" value="24-DEHYDROCHOLESTEROL REDUCTASE"/>
    <property type="match status" value="1"/>
</dbReference>
<dbReference type="PANTHER" id="PTHR10801:SF0">
    <property type="entry name" value="DELTA(24)-STEROL REDUCTASE"/>
    <property type="match status" value="1"/>
</dbReference>
<dbReference type="Pfam" id="PF01565">
    <property type="entry name" value="FAD_binding_4"/>
    <property type="match status" value="1"/>
</dbReference>
<dbReference type="SUPFAM" id="SSF56176">
    <property type="entry name" value="FAD-binding/transporter-associated domain-like"/>
    <property type="match status" value="1"/>
</dbReference>
<dbReference type="PROSITE" id="PS51387">
    <property type="entry name" value="FAD_PCMH"/>
    <property type="match status" value="1"/>
</dbReference>
<keyword id="KW-0025">Alternative splicing</keyword>
<keyword id="KW-0152">Cholesterol biosynthesis</keyword>
<keyword id="KW-0153">Cholesterol metabolism</keyword>
<keyword id="KW-0225">Disease variant</keyword>
<keyword id="KW-0256">Endoplasmic reticulum</keyword>
<keyword id="KW-0274">FAD</keyword>
<keyword id="KW-0285">Flavoprotein</keyword>
<keyword id="KW-0333">Golgi apparatus</keyword>
<keyword id="KW-0444">Lipid biosynthesis</keyword>
<keyword id="KW-0443">Lipid metabolism</keyword>
<keyword id="KW-0472">Membrane</keyword>
<keyword id="KW-0521">NADP</keyword>
<keyword id="KW-0560">Oxidoreductase</keyword>
<keyword id="KW-1267">Proteomics identification</keyword>
<keyword id="KW-1185">Reference proteome</keyword>
<keyword id="KW-0732">Signal</keyword>
<keyword id="KW-0752">Steroid biosynthesis</keyword>
<keyword id="KW-0753">Steroid metabolism</keyword>
<keyword id="KW-0756">Sterol biosynthesis</keyword>
<keyword id="KW-1207">Sterol metabolism</keyword>
<keyword id="KW-0812">Transmembrane</keyword>
<keyword id="KW-1133">Transmembrane helix</keyword>
<comment type="function">
    <text evidence="4 5 6 7 8 9">Catalyzes the reduction of the delta-24 double bond of sterol intermediates during cholesterol biosynthesis (PubMed:11519011, PubMed:21671375, PubMed:22178193, PubMed:25637936). In addition to its cholesterol-synthesizing activity, can protect cells from oxidative stress by reducing caspase 3 activity during apoptosis induced by oxidative stress (PubMed:11007892, PubMed:22010141). Also protects against amyloid-beta peptide-induced apoptosis (PubMed:11007892).</text>
</comment>
<comment type="catalytic activity">
    <reaction evidence="5 6 9">
        <text>cholesterol + NADP(+) = desmosterol + NADPH + H(+)</text>
        <dbReference type="Rhea" id="RHEA:36391"/>
        <dbReference type="ChEBI" id="CHEBI:15378"/>
        <dbReference type="ChEBI" id="CHEBI:16113"/>
        <dbReference type="ChEBI" id="CHEBI:17737"/>
        <dbReference type="ChEBI" id="CHEBI:57783"/>
        <dbReference type="ChEBI" id="CHEBI:58349"/>
        <dbReference type="EC" id="1.3.1.72"/>
    </reaction>
    <physiologicalReaction direction="right-to-left" evidence="13 14">
        <dbReference type="Rhea" id="RHEA:36393"/>
    </physiologicalReaction>
</comment>
<comment type="catalytic activity">
    <reaction evidence="8">
        <text>lanosterol + NADPH + H(+) = 24,25-dihydrolanosterol + NADP(+)</text>
        <dbReference type="Rhea" id="RHEA:33919"/>
        <dbReference type="ChEBI" id="CHEBI:15378"/>
        <dbReference type="ChEBI" id="CHEBI:16521"/>
        <dbReference type="ChEBI" id="CHEBI:28113"/>
        <dbReference type="ChEBI" id="CHEBI:57783"/>
        <dbReference type="ChEBI" id="CHEBI:58349"/>
    </reaction>
    <physiologicalReaction direction="left-to-right" evidence="8">
        <dbReference type="Rhea" id="RHEA:33920"/>
    </physiologicalReaction>
</comment>
<comment type="catalytic activity">
    <reaction evidence="1">
        <text>5alpha-cholest-8-en-3beta-ol + NADP(+) = zymosterol + NADPH + H(+)</text>
        <dbReference type="Rhea" id="RHEA:36399"/>
        <dbReference type="ChEBI" id="CHEBI:15378"/>
        <dbReference type="ChEBI" id="CHEBI:16608"/>
        <dbReference type="ChEBI" id="CHEBI:18252"/>
        <dbReference type="ChEBI" id="CHEBI:57783"/>
        <dbReference type="ChEBI" id="CHEBI:58349"/>
        <dbReference type="EC" id="1.3.1.72"/>
    </reaction>
    <physiologicalReaction direction="right-to-left" evidence="1">
        <dbReference type="Rhea" id="RHEA:36401"/>
    </physiologicalReaction>
</comment>
<comment type="cofactor">
    <cofactor>
        <name>FAD</name>
        <dbReference type="ChEBI" id="CHEBI:57692"/>
    </cofactor>
</comment>
<comment type="pathway">
    <text evidence="5 6">Steroid biosynthesis; cholesterol biosynthesis.</text>
</comment>
<comment type="subunit">
    <text evidence="9">Interacts with DHCR7; this interaction regulates DHCR7 activity.</text>
</comment>
<comment type="interaction">
    <interactant intactId="EBI-5457558">
        <id>Q15392</id>
    </interactant>
    <interactant intactId="EBI-1045534">
        <id>O00264</id>
        <label>PGRMC1</label>
    </interactant>
    <organismsDiffer>false</organismsDiffer>
    <experiments>2</experiments>
</comment>
<comment type="subcellular location">
    <subcellularLocation>
        <location evidence="4 7">Endoplasmic reticulum membrane</location>
        <topology evidence="2">Single-pass membrane protein</topology>
    </subcellularLocation>
    <subcellularLocation>
        <location evidence="4">Golgi apparatus membrane</location>
        <topology evidence="2">Single-pass membrane protein</topology>
    </subcellularLocation>
</comment>
<comment type="alternative products">
    <event type="alternative splicing"/>
    <isoform>
        <id>Q15392-1</id>
        <name>1</name>
        <sequence type="displayed"/>
    </isoform>
    <isoform>
        <id>Q15392-2</id>
        <name>2</name>
        <sequence type="described" ref="VSP_056479"/>
    </isoform>
</comment>
<comment type="tissue specificity">
    <text evidence="4 5">Highly expressed in brain and adrenal gland with moderate expression in liver, lung, spleen, prostate and spinal cord. Low expression in heart, uterus and prostate. Undetectable in blood cells. In the brain, strongly expressed in cortical regions, substantia nigra, caudate nucleus, hippocampus, medulla oblongata and pons. In brains affected by Alzheimer disease, expression in the inferior temporal lobe is substantially lower than in the frontal cortex.</text>
</comment>
<comment type="disease" evidence="5 6">
    <disease id="DI-01482">
        <name>Desmosterolosis</name>
        <acronym>DESMOS</acronym>
        <description>Rare autosomal recessive disorder characterized by multiple congenital anomalies and elevated levels of the cholesterol precursor desmosterol in plasma, tissue, and cultured cells.</description>
        <dbReference type="MIM" id="602398"/>
    </disease>
    <text>The disease is caused by variants affecting the gene represented in this entry.</text>
</comment>
<comment type="similarity">
    <text evidence="12">Belongs to the FAD-binding oxidoreductase/transferase type 4 family.</text>
</comment>
<comment type="sequence caution" evidence="12">
    <conflict type="erroneous initiation">
        <sequence resource="EMBL-CDS" id="BAA02806"/>
    </conflict>
    <text>Extended N-terminus.</text>
</comment>
<reference key="1">
    <citation type="journal article" date="2000" name="J. Neurosci.">
        <title>The human DIMINUTO/DWARF1 homolog seladin-1 confers resistance to Alzheimer's disease-associated neurodegeneration and oxidative stress.</title>
        <authorList>
            <person name="Greeve I."/>
            <person name="Hermans-Borgmeyer I."/>
            <person name="Brellinger C."/>
            <person name="Kasper D."/>
            <person name="Gomez-Isla T."/>
            <person name="Behl C."/>
            <person name="Levkau B."/>
            <person name="Nitsch R.M."/>
        </authorList>
    </citation>
    <scope>NUCLEOTIDE SEQUENCE [MRNA] (ISOFORM 1)</scope>
    <scope>FUNCTION</scope>
    <scope>SUBCELLULAR LOCATION</scope>
    <scope>TISSUE SPECIFICITY</scope>
    <source>
        <tissue>Brain</tissue>
    </source>
</reference>
<reference key="2">
    <citation type="journal article" date="2001" name="Am. J. Hum. Genet.">
        <title>Mutations in the 3beta-hydroxysterol delta24-reductase gene cause desmosterolosis, an autosomal recessive disorder of cholesterol biosynthesis.</title>
        <authorList>
            <person name="Waterham H.R."/>
            <person name="Koster J."/>
            <person name="Romeijn G.J."/>
            <person name="Hennekam R.C.M."/>
            <person name="Vreken P."/>
            <person name="Andersson H.C."/>
            <person name="FitzPatrick D.R."/>
            <person name="Kelley R.I."/>
            <person name="Wanders R.J.A."/>
        </authorList>
    </citation>
    <scope>NUCLEOTIDE SEQUENCE [GENOMIC DNA]</scope>
    <scope>FUNCTION</scope>
    <scope>TISSUE SPECIFICITY</scope>
    <scope>VARIANTS DESMOS LYS-191; THR-294; ASN-306 AND SER-471</scope>
    <scope>CATALYTIC ACTIVITY</scope>
    <scope>CHARACTERIZATION OF VARIANTS DESMOS LYS-191; THR-294; ASN-306 AND SER-471</scope>
</reference>
<reference key="3">
    <citation type="journal article" date="1994" name="DNA Res.">
        <title>Prediction of the coding sequences of unidentified human genes. I. The coding sequences of 40 new genes (KIAA0001-KIAA0040) deduced by analysis of randomly sampled cDNA clones from human immature myeloid cell line KG-1.</title>
        <authorList>
            <person name="Nomura N."/>
            <person name="Miyajima N."/>
            <person name="Sazuka T."/>
            <person name="Tanaka A."/>
            <person name="Kawarabayasi Y."/>
            <person name="Sato S."/>
            <person name="Nagase T."/>
            <person name="Seki N."/>
            <person name="Ishikawa K."/>
            <person name="Tabata S."/>
        </authorList>
    </citation>
    <scope>NUCLEOTIDE SEQUENCE [LARGE SCALE MRNA] (ISOFORM 1)</scope>
    <source>
        <tissue>Bone marrow</tissue>
    </source>
</reference>
<reference key="4">
    <citation type="submission" date="2005-01" db="EMBL/GenBank/DDBJ databases">
        <authorList>
            <person name="Ohara O."/>
            <person name="Nagase T."/>
            <person name="Kikuno R."/>
            <person name="Nomura N."/>
        </authorList>
    </citation>
    <scope>SEQUENCE REVISION TO C-TERMINUS</scope>
</reference>
<reference key="5">
    <citation type="journal article" date="2004" name="Nat. Genet.">
        <title>Complete sequencing and characterization of 21,243 full-length human cDNAs.</title>
        <authorList>
            <person name="Ota T."/>
            <person name="Suzuki Y."/>
            <person name="Nishikawa T."/>
            <person name="Otsuki T."/>
            <person name="Sugiyama T."/>
            <person name="Irie R."/>
            <person name="Wakamatsu A."/>
            <person name="Hayashi K."/>
            <person name="Sato H."/>
            <person name="Nagai K."/>
            <person name="Kimura K."/>
            <person name="Makita H."/>
            <person name="Sekine M."/>
            <person name="Obayashi M."/>
            <person name="Nishi T."/>
            <person name="Shibahara T."/>
            <person name="Tanaka T."/>
            <person name="Ishii S."/>
            <person name="Yamamoto J."/>
            <person name="Saito K."/>
            <person name="Kawai Y."/>
            <person name="Isono Y."/>
            <person name="Nakamura Y."/>
            <person name="Nagahari K."/>
            <person name="Murakami K."/>
            <person name="Yasuda T."/>
            <person name="Iwayanagi T."/>
            <person name="Wagatsuma M."/>
            <person name="Shiratori A."/>
            <person name="Sudo H."/>
            <person name="Hosoiri T."/>
            <person name="Kaku Y."/>
            <person name="Kodaira H."/>
            <person name="Kondo H."/>
            <person name="Sugawara M."/>
            <person name="Takahashi M."/>
            <person name="Kanda K."/>
            <person name="Yokoi T."/>
            <person name="Furuya T."/>
            <person name="Kikkawa E."/>
            <person name="Omura Y."/>
            <person name="Abe K."/>
            <person name="Kamihara K."/>
            <person name="Katsuta N."/>
            <person name="Sato K."/>
            <person name="Tanikawa M."/>
            <person name="Yamazaki M."/>
            <person name="Ninomiya K."/>
            <person name="Ishibashi T."/>
            <person name="Yamashita H."/>
            <person name="Murakawa K."/>
            <person name="Fujimori K."/>
            <person name="Tanai H."/>
            <person name="Kimata M."/>
            <person name="Watanabe M."/>
            <person name="Hiraoka S."/>
            <person name="Chiba Y."/>
            <person name="Ishida S."/>
            <person name="Ono Y."/>
            <person name="Takiguchi S."/>
            <person name="Watanabe S."/>
            <person name="Yosida M."/>
            <person name="Hotuta T."/>
            <person name="Kusano J."/>
            <person name="Kanehori K."/>
            <person name="Takahashi-Fujii A."/>
            <person name="Hara H."/>
            <person name="Tanase T.-O."/>
            <person name="Nomura Y."/>
            <person name="Togiya S."/>
            <person name="Komai F."/>
            <person name="Hara R."/>
            <person name="Takeuchi K."/>
            <person name="Arita M."/>
            <person name="Imose N."/>
            <person name="Musashino K."/>
            <person name="Yuuki H."/>
            <person name="Oshima A."/>
            <person name="Sasaki N."/>
            <person name="Aotsuka S."/>
            <person name="Yoshikawa Y."/>
            <person name="Matsunawa H."/>
            <person name="Ichihara T."/>
            <person name="Shiohata N."/>
            <person name="Sano S."/>
            <person name="Moriya S."/>
            <person name="Momiyama H."/>
            <person name="Satoh N."/>
            <person name="Takami S."/>
            <person name="Terashima Y."/>
            <person name="Suzuki O."/>
            <person name="Nakagawa S."/>
            <person name="Senoh A."/>
            <person name="Mizoguchi H."/>
            <person name="Goto Y."/>
            <person name="Shimizu F."/>
            <person name="Wakebe H."/>
            <person name="Hishigaki H."/>
            <person name="Watanabe T."/>
            <person name="Sugiyama A."/>
            <person name="Takemoto M."/>
            <person name="Kawakami B."/>
            <person name="Yamazaki M."/>
            <person name="Watanabe K."/>
            <person name="Kumagai A."/>
            <person name="Itakura S."/>
            <person name="Fukuzumi Y."/>
            <person name="Fujimori Y."/>
            <person name="Komiyama M."/>
            <person name="Tashiro H."/>
            <person name="Tanigami A."/>
            <person name="Fujiwara T."/>
            <person name="Ono T."/>
            <person name="Yamada K."/>
            <person name="Fujii Y."/>
            <person name="Ozaki K."/>
            <person name="Hirao M."/>
            <person name="Ohmori Y."/>
            <person name="Kawabata A."/>
            <person name="Hikiji T."/>
            <person name="Kobatake N."/>
            <person name="Inagaki H."/>
            <person name="Ikema Y."/>
            <person name="Okamoto S."/>
            <person name="Okitani R."/>
            <person name="Kawakami T."/>
            <person name="Noguchi S."/>
            <person name="Itoh T."/>
            <person name="Shigeta K."/>
            <person name="Senba T."/>
            <person name="Matsumura K."/>
            <person name="Nakajima Y."/>
            <person name="Mizuno T."/>
            <person name="Morinaga M."/>
            <person name="Sasaki M."/>
            <person name="Togashi T."/>
            <person name="Oyama M."/>
            <person name="Hata H."/>
            <person name="Watanabe M."/>
            <person name="Komatsu T."/>
            <person name="Mizushima-Sugano J."/>
            <person name="Satoh T."/>
            <person name="Shirai Y."/>
            <person name="Takahashi Y."/>
            <person name="Nakagawa K."/>
            <person name="Okumura K."/>
            <person name="Nagase T."/>
            <person name="Nomura N."/>
            <person name="Kikuchi H."/>
            <person name="Masuho Y."/>
            <person name="Yamashita R."/>
            <person name="Nakai K."/>
            <person name="Yada T."/>
            <person name="Nakamura Y."/>
            <person name="Ohara O."/>
            <person name="Isogai T."/>
            <person name="Sugano S."/>
        </authorList>
    </citation>
    <scope>NUCLEOTIDE SEQUENCE [LARGE SCALE MRNA] (ISOFORM 2)</scope>
    <source>
        <tissue>Testis</tissue>
    </source>
</reference>
<reference key="6">
    <citation type="journal article" date="2006" name="Nature">
        <title>The DNA sequence and biological annotation of human chromosome 1.</title>
        <authorList>
            <person name="Gregory S.G."/>
            <person name="Barlow K.F."/>
            <person name="McLay K.E."/>
            <person name="Kaul R."/>
            <person name="Swarbreck D."/>
            <person name="Dunham A."/>
            <person name="Scott C.E."/>
            <person name="Howe K.L."/>
            <person name="Woodfine K."/>
            <person name="Spencer C.C.A."/>
            <person name="Jones M.C."/>
            <person name="Gillson C."/>
            <person name="Searle S."/>
            <person name="Zhou Y."/>
            <person name="Kokocinski F."/>
            <person name="McDonald L."/>
            <person name="Evans R."/>
            <person name="Phillips K."/>
            <person name="Atkinson A."/>
            <person name="Cooper R."/>
            <person name="Jones C."/>
            <person name="Hall R.E."/>
            <person name="Andrews T.D."/>
            <person name="Lloyd C."/>
            <person name="Ainscough R."/>
            <person name="Almeida J.P."/>
            <person name="Ambrose K.D."/>
            <person name="Anderson F."/>
            <person name="Andrew R.W."/>
            <person name="Ashwell R.I.S."/>
            <person name="Aubin K."/>
            <person name="Babbage A.K."/>
            <person name="Bagguley C.L."/>
            <person name="Bailey J."/>
            <person name="Beasley H."/>
            <person name="Bethel G."/>
            <person name="Bird C.P."/>
            <person name="Bray-Allen S."/>
            <person name="Brown J.Y."/>
            <person name="Brown A.J."/>
            <person name="Buckley D."/>
            <person name="Burton J."/>
            <person name="Bye J."/>
            <person name="Carder C."/>
            <person name="Chapman J.C."/>
            <person name="Clark S.Y."/>
            <person name="Clarke G."/>
            <person name="Clee C."/>
            <person name="Cobley V."/>
            <person name="Collier R.E."/>
            <person name="Corby N."/>
            <person name="Coville G.J."/>
            <person name="Davies J."/>
            <person name="Deadman R."/>
            <person name="Dunn M."/>
            <person name="Earthrowl M."/>
            <person name="Ellington A.G."/>
            <person name="Errington H."/>
            <person name="Frankish A."/>
            <person name="Frankland J."/>
            <person name="French L."/>
            <person name="Garner P."/>
            <person name="Garnett J."/>
            <person name="Gay L."/>
            <person name="Ghori M.R.J."/>
            <person name="Gibson R."/>
            <person name="Gilby L.M."/>
            <person name="Gillett W."/>
            <person name="Glithero R.J."/>
            <person name="Grafham D.V."/>
            <person name="Griffiths C."/>
            <person name="Griffiths-Jones S."/>
            <person name="Grocock R."/>
            <person name="Hammond S."/>
            <person name="Harrison E.S.I."/>
            <person name="Hart E."/>
            <person name="Haugen E."/>
            <person name="Heath P.D."/>
            <person name="Holmes S."/>
            <person name="Holt K."/>
            <person name="Howden P.J."/>
            <person name="Hunt A.R."/>
            <person name="Hunt S.E."/>
            <person name="Hunter G."/>
            <person name="Isherwood J."/>
            <person name="James R."/>
            <person name="Johnson C."/>
            <person name="Johnson D."/>
            <person name="Joy A."/>
            <person name="Kay M."/>
            <person name="Kershaw J.K."/>
            <person name="Kibukawa M."/>
            <person name="Kimberley A.M."/>
            <person name="King A."/>
            <person name="Knights A.J."/>
            <person name="Lad H."/>
            <person name="Laird G."/>
            <person name="Lawlor S."/>
            <person name="Leongamornlert D.A."/>
            <person name="Lloyd D.M."/>
            <person name="Loveland J."/>
            <person name="Lovell J."/>
            <person name="Lush M.J."/>
            <person name="Lyne R."/>
            <person name="Martin S."/>
            <person name="Mashreghi-Mohammadi M."/>
            <person name="Matthews L."/>
            <person name="Matthews N.S.W."/>
            <person name="McLaren S."/>
            <person name="Milne S."/>
            <person name="Mistry S."/>
            <person name="Moore M.J.F."/>
            <person name="Nickerson T."/>
            <person name="O'Dell C.N."/>
            <person name="Oliver K."/>
            <person name="Palmeiri A."/>
            <person name="Palmer S.A."/>
            <person name="Parker A."/>
            <person name="Patel D."/>
            <person name="Pearce A.V."/>
            <person name="Peck A.I."/>
            <person name="Pelan S."/>
            <person name="Phelps K."/>
            <person name="Phillimore B.J."/>
            <person name="Plumb R."/>
            <person name="Rajan J."/>
            <person name="Raymond C."/>
            <person name="Rouse G."/>
            <person name="Saenphimmachak C."/>
            <person name="Sehra H.K."/>
            <person name="Sheridan E."/>
            <person name="Shownkeen R."/>
            <person name="Sims S."/>
            <person name="Skuce C.D."/>
            <person name="Smith M."/>
            <person name="Steward C."/>
            <person name="Subramanian S."/>
            <person name="Sycamore N."/>
            <person name="Tracey A."/>
            <person name="Tromans A."/>
            <person name="Van Helmond Z."/>
            <person name="Wall M."/>
            <person name="Wallis J.M."/>
            <person name="White S."/>
            <person name="Whitehead S.L."/>
            <person name="Wilkinson J.E."/>
            <person name="Willey D.L."/>
            <person name="Williams H."/>
            <person name="Wilming L."/>
            <person name="Wray P.W."/>
            <person name="Wu Z."/>
            <person name="Coulson A."/>
            <person name="Vaudin M."/>
            <person name="Sulston J.E."/>
            <person name="Durbin R.M."/>
            <person name="Hubbard T."/>
            <person name="Wooster R."/>
            <person name="Dunham I."/>
            <person name="Carter N.P."/>
            <person name="McVean G."/>
            <person name="Ross M.T."/>
            <person name="Harrow J."/>
            <person name="Olson M.V."/>
            <person name="Beck S."/>
            <person name="Rogers J."/>
            <person name="Bentley D.R."/>
        </authorList>
    </citation>
    <scope>NUCLEOTIDE SEQUENCE [LARGE SCALE GENOMIC DNA]</scope>
</reference>
<reference key="7">
    <citation type="submission" date="2005-09" db="EMBL/GenBank/DDBJ databases">
        <authorList>
            <person name="Mural R.J."/>
            <person name="Istrail S."/>
            <person name="Sutton G.G."/>
            <person name="Florea L."/>
            <person name="Halpern A.L."/>
            <person name="Mobarry C.M."/>
            <person name="Lippert R."/>
            <person name="Walenz B."/>
            <person name="Shatkay H."/>
            <person name="Dew I."/>
            <person name="Miller J.R."/>
            <person name="Flanigan M.J."/>
            <person name="Edwards N.J."/>
            <person name="Bolanos R."/>
            <person name="Fasulo D."/>
            <person name="Halldorsson B.V."/>
            <person name="Hannenhalli S."/>
            <person name="Turner R."/>
            <person name="Yooseph S."/>
            <person name="Lu F."/>
            <person name="Nusskern D.R."/>
            <person name="Shue B.C."/>
            <person name="Zheng X.H."/>
            <person name="Zhong F."/>
            <person name="Delcher A.L."/>
            <person name="Huson D.H."/>
            <person name="Kravitz S.A."/>
            <person name="Mouchard L."/>
            <person name="Reinert K."/>
            <person name="Remington K.A."/>
            <person name="Clark A.G."/>
            <person name="Waterman M.S."/>
            <person name="Eichler E.E."/>
            <person name="Adams M.D."/>
            <person name="Hunkapiller M.W."/>
            <person name="Myers E.W."/>
            <person name="Venter J.C."/>
        </authorList>
    </citation>
    <scope>NUCLEOTIDE SEQUENCE [LARGE SCALE GENOMIC DNA]</scope>
</reference>
<reference key="8">
    <citation type="journal article" date="2004" name="Genome Res.">
        <title>The status, quality, and expansion of the NIH full-length cDNA project: the Mammalian Gene Collection (MGC).</title>
        <authorList>
            <consortium name="The MGC Project Team"/>
        </authorList>
    </citation>
    <scope>NUCLEOTIDE SEQUENCE [LARGE SCALE MRNA] (ISOFORM 1)</scope>
    <source>
        <tissue>Brain</tissue>
        <tissue>Placenta</tissue>
    </source>
</reference>
<reference key="9">
    <citation type="journal article" date="2011" name="Am. J. Med. Genet. A">
        <title>Desmosterolosis-phenotypic and molecular characterization of a third case and review of the literature.</title>
        <authorList>
            <person name="Schaaf C.P."/>
            <person name="Koster J."/>
            <person name="Katsonis P."/>
            <person name="Kratz L."/>
            <person name="Shchelochkov O.A."/>
            <person name="Scaglia F."/>
            <person name="Kelley R.I."/>
            <person name="Lichtarge O."/>
            <person name="Waterham H.R."/>
            <person name="Shinawi M."/>
        </authorList>
    </citation>
    <scope>VARIANTS DESMOS HIS-94 AND LYS-480</scope>
    <scope>CHARACTERIZATION OF VARIANTS DESMOS HIS-94 AND LYS-480</scope>
    <scope>CATALYTIC ACTIVITY</scope>
    <scope>FUNCTION</scope>
</reference>
<reference key="10">
    <citation type="journal article" date="2011" name="BMC Syst. Biol.">
        <title>Initial characterization of the human central proteome.</title>
        <authorList>
            <person name="Burkard T.R."/>
            <person name="Planyavsky M."/>
            <person name="Kaupe I."/>
            <person name="Breitwieser F.P."/>
            <person name="Buerckstuemmer T."/>
            <person name="Bennett K.L."/>
            <person name="Superti-Furga G."/>
            <person name="Colinge J."/>
        </authorList>
    </citation>
    <scope>IDENTIFICATION BY MASS SPECTROMETRY [LARGE SCALE ANALYSIS]</scope>
</reference>
<reference key="11">
    <citation type="journal article" date="2012" name="Biochim. Biophys. Acta">
        <title>The endogenous regulator 24(S),25-epoxycholesterol inhibits cholesterol synthesis at DHCR24 (Seladin-1).</title>
        <authorList>
            <person name="Zerenturk E.J."/>
            <person name="Kristiana I."/>
            <person name="Gill S."/>
            <person name="Brown A.J."/>
        </authorList>
    </citation>
    <scope>CATALYTIC ACTIVITY</scope>
    <scope>FUNCTION</scope>
</reference>
<reference key="12">
    <citation type="journal article" date="2012" name="J. Mol. Endocrinol.">
        <title>The membrane topological analysis of 3 {beta}-hydroxysteroid-delta24 reductase (DHCR24) on endoplasmic reticulum.</title>
        <authorList>
            <person name="Lu X."/>
            <person name="Li Y."/>
            <person name="Liu J."/>
            <person name="Cao X."/>
            <person name="Wang X."/>
            <person name="Wang D."/>
            <person name="Seo H."/>
            <person name="Gao B."/>
        </authorList>
    </citation>
    <scope>FUNCTION</scope>
    <scope>SUBCELLULAR LOCATION</scope>
    <scope>TOPOLOGY</scope>
</reference>
<reference key="13">
    <citation type="journal article" date="2014" name="J. Proteomics">
        <title>An enzyme assisted RP-RPLC approach for in-depth analysis of human liver phosphoproteome.</title>
        <authorList>
            <person name="Bian Y."/>
            <person name="Song C."/>
            <person name="Cheng K."/>
            <person name="Dong M."/>
            <person name="Wang F."/>
            <person name="Huang J."/>
            <person name="Sun D."/>
            <person name="Wang L."/>
            <person name="Ye M."/>
            <person name="Zou H."/>
        </authorList>
    </citation>
    <scope>IDENTIFICATION BY MASS SPECTROMETRY [LARGE SCALE ANALYSIS]</scope>
    <source>
        <tissue>Liver</tissue>
    </source>
</reference>
<reference key="14">
    <citation type="journal article" date="2015" name="J. Lipid Res.">
        <title>The terminal enzymes of cholesterol synthesis, DHCR24 and DHCR7, interact physically and functionally.</title>
        <authorList>
            <person name="Luu W."/>
            <person name="Hart-Smith G."/>
            <person name="Sharpe L.J."/>
            <person name="Brown A.J."/>
        </authorList>
    </citation>
    <scope>CATALYTIC ACTIVITY</scope>
    <scope>INTERACTION WITH DHCR7</scope>
</reference>
<reference key="15">
    <citation type="journal article" date="2015" name="Proteomics">
        <title>N-terminome analysis of the human mitochondrial proteome.</title>
        <authorList>
            <person name="Vaca Jacome A.S."/>
            <person name="Rabilloud T."/>
            <person name="Schaeffer-Reiss C."/>
            <person name="Rompais M."/>
            <person name="Ayoub D."/>
            <person name="Lane L."/>
            <person name="Bairoch A."/>
            <person name="Van Dorsselaer A."/>
            <person name="Carapito C."/>
        </authorList>
    </citation>
    <scope>IDENTIFICATION BY MASS SPECTROMETRY [LARGE SCALE ANALYSIS]</scope>
</reference>
<name>DHC24_HUMAN</name>
<protein>
    <recommendedName>
        <fullName>Delta(24)-sterol reductase</fullName>
        <ecNumber evidence="5 6">1.3.1.72</ecNumber>
    </recommendedName>
    <alternativeName>
        <fullName>24-dehydrocholesterol reductase</fullName>
    </alternativeName>
    <alternativeName>
        <fullName>3-beta-hydroxysterol Delta-24-reductase</fullName>
    </alternativeName>
    <alternativeName>
        <fullName>Diminuto/dwarf1 homolog</fullName>
    </alternativeName>
    <alternativeName>
        <fullName evidence="10">Seladin-1</fullName>
    </alternativeName>
</protein>
<feature type="signal peptide" evidence="2">
    <location>
        <begin position="1"/>
        <end position="22"/>
    </location>
</feature>
<feature type="chain" id="PRO_0000007230" description="Delta(24)-sterol reductase">
    <location>
        <begin position="23"/>
        <end position="516"/>
    </location>
</feature>
<feature type="topological domain" description="Lumenal" evidence="7">
    <location>
        <begin position="23"/>
        <end position="31"/>
    </location>
</feature>
<feature type="transmembrane region" description="Helical" evidence="2">
    <location>
        <begin position="32"/>
        <end position="52"/>
    </location>
</feature>
<feature type="topological domain" description="Cytoplasmic" evidence="7">
    <location>
        <begin position="53"/>
        <end position="516"/>
    </location>
</feature>
<feature type="domain" description="FAD-binding PCMH-type" evidence="3">
    <location>
        <begin position="58"/>
        <end position="234"/>
    </location>
</feature>
<feature type="binding site" evidence="2">
    <location>
        <begin position="163"/>
        <end position="175"/>
    </location>
    <ligand>
        <name>FAD</name>
        <dbReference type="ChEBI" id="CHEBI:57692"/>
    </ligand>
</feature>
<feature type="site" description="Cleavage; by caspase" evidence="2">
    <location>
        <begin position="122"/>
        <end position="123"/>
    </location>
</feature>
<feature type="site" description="Cleavage; by caspase" evidence="2">
    <location>
        <begin position="383"/>
        <end position="384"/>
    </location>
</feature>
<feature type="splice variant" id="VSP_056479" description="In isoform 2." evidence="11">
    <original>MEPAVSLAVCALLFLLWVRLKGLEFVLIHQRWVFVCLFLLPLSLIFDIYYYVRAWVVFKLSSAPRLHEQRVRDIQK</original>
    <variation>MGAGEQNRQSAHCVQGICGYLEGDEEGEEGEVRST</variation>
    <location>
        <begin position="1"/>
        <end position="76"/>
    </location>
</feature>
<feature type="sequence variant" id="VAR_081889" description="In DESMOS; decreases production of cholesterol from desmosterol; dbSNP:rs387906939." evidence="6">
    <original>R</original>
    <variation>H</variation>
    <location>
        <position position="94"/>
    </location>
</feature>
<feature type="sequence variant" id="VAR_012732" description="In DESMOS; decreases production of cholesterol from desmosterol; dbSNP:rs119475041." evidence="5">
    <original>E</original>
    <variation>K</variation>
    <location>
        <position position="191"/>
    </location>
</feature>
<feature type="sequence variant" id="VAR_012733" description="In DESMOS; decreases production of cholesterol from desmosterol; dbSNP:rs281797257." evidence="5">
    <original>N</original>
    <variation>T</variation>
    <location>
        <position position="294"/>
    </location>
</feature>
<feature type="sequence variant" id="VAR_012734" description="In DESMOS; decreases production of cholesterol from desmosterol; dbSNP:rs281797256." evidence="5">
    <original>K</original>
    <variation>N</variation>
    <location>
        <position position="306"/>
    </location>
</feature>
<feature type="sequence variant" id="VAR_012735" description="In DESMOS; complete loss of ability to convert desmosterol to cholesterol; dbSNP:rs28939092." evidence="5 6">
    <original>Y</original>
    <variation>S</variation>
    <location>
        <position position="471"/>
    </location>
</feature>
<feature type="sequence variant" id="VAR_081890" description="In DESMOS; decreases production of cholesterol from desmosterol; dbSNP:rs387906940." evidence="6">
    <original>E</original>
    <variation>K</variation>
    <location>
        <position position="480"/>
    </location>
</feature>
<accession>Q15392</accession>
<accession>B7Z817</accession>
<accession>D3DQ51</accession>
<accession>Q9HBA8</accession>
<evidence type="ECO:0000250" key="1">
    <source>
        <dbReference type="UniProtKB" id="Q8VCH6"/>
    </source>
</evidence>
<evidence type="ECO:0000255" key="2"/>
<evidence type="ECO:0000255" key="3">
    <source>
        <dbReference type="PROSITE-ProRule" id="PRU00718"/>
    </source>
</evidence>
<evidence type="ECO:0000269" key="4">
    <source>
    </source>
</evidence>
<evidence type="ECO:0000269" key="5">
    <source>
    </source>
</evidence>
<evidence type="ECO:0000269" key="6">
    <source>
    </source>
</evidence>
<evidence type="ECO:0000269" key="7">
    <source>
    </source>
</evidence>
<evidence type="ECO:0000269" key="8">
    <source>
    </source>
</evidence>
<evidence type="ECO:0000269" key="9">
    <source>
    </source>
</evidence>
<evidence type="ECO:0000303" key="10">
    <source>
    </source>
</evidence>
<evidence type="ECO:0000303" key="11">
    <source>
    </source>
</evidence>
<evidence type="ECO:0000305" key="12"/>
<evidence type="ECO:0000305" key="13">
    <source>
    </source>
</evidence>
<evidence type="ECO:0000305" key="14">
    <source>
    </source>
</evidence>
<organism>
    <name type="scientific">Homo sapiens</name>
    <name type="common">Human</name>
    <dbReference type="NCBI Taxonomy" id="9606"/>
    <lineage>
        <taxon>Eukaryota</taxon>
        <taxon>Metazoa</taxon>
        <taxon>Chordata</taxon>
        <taxon>Craniata</taxon>
        <taxon>Vertebrata</taxon>
        <taxon>Euteleostomi</taxon>
        <taxon>Mammalia</taxon>
        <taxon>Eutheria</taxon>
        <taxon>Euarchontoglires</taxon>
        <taxon>Primates</taxon>
        <taxon>Haplorrhini</taxon>
        <taxon>Catarrhini</taxon>
        <taxon>Hominidae</taxon>
        <taxon>Homo</taxon>
    </lineage>
</organism>
<proteinExistence type="evidence at protein level"/>